<accession>Q39837</accession>
<accession>O49854</accession>
<evidence type="ECO:0000255" key="1"/>
<evidence type="ECO:0000269" key="2">
    <source>
    </source>
</evidence>
<evidence type="ECO:0007829" key="3">
    <source>
        <dbReference type="PDB" id="1JU8"/>
    </source>
</evidence>
<protein>
    <recommendedName>
        <fullName>Albumin-1</fullName>
        <shortName>A1</shortName>
    </recommendedName>
    <component>
        <recommendedName>
            <fullName>Albumin-1 chain b</fullName>
            <shortName>A1b</shortName>
        </recommendedName>
        <alternativeName>
            <fullName>Leginsulin</fullName>
        </alternativeName>
    </component>
    <component>
        <recommendedName>
            <fullName>Albumin-1 chain a</fullName>
            <shortName>A1a</shortName>
        </recommendedName>
    </component>
</protein>
<reference key="1">
    <citation type="journal article" date="1994" name="Eur. J. Biochem.">
        <title>A peptide that stimulates phosphorylation of the plant insulin-binding protein. Isolation, primary structure and cDNA cloning.</title>
        <authorList>
            <person name="Watanabe Y."/>
            <person name="Barbashov S.F."/>
            <person name="Komatsu S."/>
            <person name="Hemmings A.M."/>
            <person name="Miyagi M."/>
            <person name="Tsunasawa S."/>
            <person name="Hirano H."/>
        </authorList>
    </citation>
    <scope>NUCLEOTIDE SEQUENCE [MRNA]</scope>
    <source>
        <strain>cv. Miyagishirome</strain>
        <tissue>Radicle</tissue>
    </source>
</reference>
<reference key="2">
    <citation type="journal article" date="1999" name="Ying Yong Yu Huan Jing Sheng Wu Xue Bao">
        <title>Analysis of leginsulin gene in soybean cultivar (Glycine max) and wild species (Glycine soja).</title>
        <authorList>
            <person name="Tan J.Z."/>
            <person name="Lou C.F."/>
            <person name="Hirano H."/>
        </authorList>
    </citation>
    <scope>NUCLEOTIDE SEQUENCE</scope>
    <source>
        <strain>cv. Miyagishirome</strain>
    </source>
</reference>
<reference key="3">
    <citation type="submission" date="2001-06" db="UniProtKB">
        <authorList>
            <person name="Hirano H."/>
        </authorList>
    </citation>
    <scope>SEQUENCE REVISION TO 64</scope>
</reference>
<reference key="4">
    <citation type="journal article" date="2003" name="Eur. J. Biochem.">
        <title>A possible physiological function and the tertiary structure of a 4-kDa peptide in legumes.</title>
        <authorList>
            <person name="Yamazaki T."/>
            <person name="Takaoka M."/>
            <person name="Katoh E."/>
            <person name="Hanada K."/>
            <person name="Sakita M."/>
            <person name="Sakata K."/>
            <person name="Nishiuchi Y."/>
            <person name="Hirano H."/>
        </authorList>
    </citation>
    <scope>STRUCTURE BY NMR OF 20-56</scope>
    <scope>MUTAGENESIS OF ARG-35; VAL-48 AND PHE-50</scope>
    <scope>FUNCTION</scope>
    <source>
        <tissue>Radicle</tissue>
    </source>
</reference>
<proteinExistence type="evidence at protein level"/>
<name>ALB1_SOYBN</name>
<keyword id="KW-0002">3D-structure</keyword>
<keyword id="KW-1015">Disulfide bond</keyword>
<keyword id="KW-0960">Knottin</keyword>
<keyword id="KW-1185">Reference proteome</keyword>
<keyword id="KW-0708">Seed storage protein</keyword>
<keyword id="KW-0732">Signal</keyword>
<keyword id="KW-0758">Storage protein</keyword>
<keyword id="KW-0800">Toxin</keyword>
<feature type="signal peptide">
    <location>
        <begin position="1"/>
        <end position="19"/>
    </location>
</feature>
<feature type="chain" id="PRO_0000032252" description="Albumin-1 chain b">
    <location>
        <begin position="20"/>
        <end position="56"/>
    </location>
</feature>
<feature type="propeptide" id="PRO_0000032253" evidence="1">
    <location>
        <begin position="57"/>
        <end position="64"/>
    </location>
</feature>
<feature type="chain" id="PRO_0000032254" description="Albumin-1 chain a" evidence="1">
    <location>
        <begin position="65"/>
        <end position="116"/>
    </location>
</feature>
<feature type="propeptide" id="PRO_0000032255" evidence="1">
    <location>
        <begin position="117"/>
        <end position="119"/>
    </location>
</feature>
<feature type="disulfide bond">
    <location>
        <begin position="22"/>
        <end position="39"/>
    </location>
</feature>
<feature type="disulfide bond">
    <location>
        <begin position="26"/>
        <end position="41"/>
    </location>
</feature>
<feature type="disulfide bond">
    <location>
        <begin position="34"/>
        <end position="51"/>
    </location>
</feature>
<feature type="mutagenesis site" description="No effect." evidence="2">
    <original>R</original>
    <variation>A</variation>
    <location>
        <position position="35"/>
    </location>
</feature>
<feature type="mutagenesis site" description="Decreased binding to globulin." evidence="2">
    <original>V</original>
    <variation>A</variation>
    <location>
        <position position="48"/>
    </location>
</feature>
<feature type="mutagenesis site" description="Decreased binding to globulin." evidence="2">
    <original>F</original>
    <variation>A</variation>
    <location>
        <position position="50"/>
    </location>
</feature>
<feature type="strand" evidence="3">
    <location>
        <begin position="24"/>
        <end position="26"/>
    </location>
</feature>
<feature type="strand" evidence="3">
    <location>
        <begin position="28"/>
        <end position="35"/>
    </location>
</feature>
<feature type="strand" evidence="3">
    <location>
        <begin position="39"/>
        <end position="43"/>
    </location>
</feature>
<feature type="strand" evidence="3">
    <location>
        <begin position="45"/>
        <end position="47"/>
    </location>
</feature>
<feature type="strand" evidence="3">
    <location>
        <begin position="49"/>
        <end position="52"/>
    </location>
</feature>
<sequence length="119" mass="13046">MAVFLLATSTIMFPTKIEAADCNGACSPFEVPPCRSRDCRCVPIGLFVGFCIHPTGLSSVAKMIDEHPNLCQSDDECMKKGSGNFCARYPNNYIDYGWCFDSDSEALKGFLAMPRATTK</sequence>
<comment type="function">
    <text evidence="2">A1b binds to basic 7S globulin (BG) and stimulates its phosphorylation activity. Involved in the signal transduction system to regulate the growth and differentiation as a hormone peptide.</text>
</comment>
<comment type="domain">
    <text>The presence of a 'disulfide through disulfide knot' structurally defines this protein as a knottin.</text>
</comment>
<comment type="PTM">
    <text>The C-terminal glycine may be removed from A1b.</text>
</comment>
<dbReference type="EMBL" id="D17396">
    <property type="protein sequence ID" value="BAA04219.1"/>
    <property type="molecule type" value="mRNA"/>
</dbReference>
<dbReference type="EMBL" id="AJ223037">
    <property type="protein sequence ID" value="CAA11040.1"/>
    <property type="molecule type" value="Genomic_DNA"/>
</dbReference>
<dbReference type="PIR" id="S48192">
    <property type="entry name" value="S48192"/>
</dbReference>
<dbReference type="RefSeq" id="NP_001237714.1">
    <property type="nucleotide sequence ID" value="NM_001250785.1"/>
</dbReference>
<dbReference type="PDB" id="1JU8">
    <property type="method" value="NMR"/>
    <property type="chains" value="A=20-56"/>
</dbReference>
<dbReference type="PDBsum" id="1JU8"/>
<dbReference type="SMR" id="Q39837"/>
<dbReference type="STRING" id="3847.Q39837"/>
<dbReference type="PaxDb" id="3847-GLYMA13G26340.1"/>
<dbReference type="GeneID" id="547776"/>
<dbReference type="KEGG" id="gmx:547776"/>
<dbReference type="InParanoid" id="Q39837"/>
<dbReference type="OrthoDB" id="1388106at2759"/>
<dbReference type="EvolutionaryTrace" id="Q39837"/>
<dbReference type="Proteomes" id="UP000008827">
    <property type="component" value="Unplaced"/>
</dbReference>
<dbReference type="GO" id="GO:0045735">
    <property type="term" value="F:nutrient reservoir activity"/>
    <property type="evidence" value="ECO:0007669"/>
    <property type="project" value="UniProtKB-KW"/>
</dbReference>
<dbReference type="GO" id="GO:0090729">
    <property type="term" value="F:toxin activity"/>
    <property type="evidence" value="ECO:0007669"/>
    <property type="project" value="UniProtKB-KW"/>
</dbReference>
<dbReference type="InterPro" id="IPR012512">
    <property type="entry name" value="Albumin_I"/>
</dbReference>
<dbReference type="InterPro" id="IPR032000">
    <property type="entry name" value="Albumin_I_a"/>
</dbReference>
<dbReference type="Pfam" id="PF08027">
    <property type="entry name" value="Albumin_I"/>
    <property type="match status" value="1"/>
</dbReference>
<dbReference type="Pfam" id="PF16720">
    <property type="entry name" value="Albumin_I_a"/>
    <property type="match status" value="1"/>
</dbReference>
<dbReference type="SUPFAM" id="SSF57059">
    <property type="entry name" value="omega toxin-like"/>
    <property type="match status" value="1"/>
</dbReference>
<organism>
    <name type="scientific">Glycine max</name>
    <name type="common">Soybean</name>
    <name type="synonym">Glycine hispida</name>
    <dbReference type="NCBI Taxonomy" id="3847"/>
    <lineage>
        <taxon>Eukaryota</taxon>
        <taxon>Viridiplantae</taxon>
        <taxon>Streptophyta</taxon>
        <taxon>Embryophyta</taxon>
        <taxon>Tracheophyta</taxon>
        <taxon>Spermatophyta</taxon>
        <taxon>Magnoliopsida</taxon>
        <taxon>eudicotyledons</taxon>
        <taxon>Gunneridae</taxon>
        <taxon>Pentapetalae</taxon>
        <taxon>rosids</taxon>
        <taxon>fabids</taxon>
        <taxon>Fabales</taxon>
        <taxon>Fabaceae</taxon>
        <taxon>Papilionoideae</taxon>
        <taxon>50 kb inversion clade</taxon>
        <taxon>NPAAA clade</taxon>
        <taxon>indigoferoid/millettioid clade</taxon>
        <taxon>Phaseoleae</taxon>
        <taxon>Glycine</taxon>
        <taxon>Glycine subgen. Soja</taxon>
    </lineage>
</organism>